<protein>
    <recommendedName>
        <fullName evidence="5">Tumor necrosis factor receptor type 1-associated DEATH domain protein</fullName>
        <shortName evidence="1">TNFR1-associated DEATH domain protein</shortName>
    </recommendedName>
    <alternativeName>
        <fullName evidence="1">TNFRSF1A-associated via death domain</fullName>
    </alternativeName>
</protein>
<accession>Q2KI74</accession>
<feature type="chain" id="PRO_0000291658" description="Tumor necrosis factor receptor type 1-associated DEATH domain protein">
    <location>
        <begin position="1"/>
        <end position="312"/>
    </location>
</feature>
<feature type="domain" description="Death" evidence="3">
    <location>
        <begin position="215"/>
        <end position="305"/>
    </location>
</feature>
<feature type="region of interest" description="Disordered" evidence="4">
    <location>
        <begin position="166"/>
        <end position="200"/>
    </location>
</feature>
<feature type="region of interest" description="Interaction with KRT14 and KRT18" evidence="1">
    <location>
        <begin position="222"/>
        <end position="289"/>
    </location>
</feature>
<feature type="short sequence motif" description="Nuclear export signal" evidence="2">
    <location>
        <begin position="147"/>
        <end position="163"/>
    </location>
</feature>
<feature type="short sequence motif" description="Nuclear localization signal" evidence="2">
    <location>
        <begin position="231"/>
        <end position="244"/>
    </location>
</feature>
<dbReference type="EMBL" id="BC112743">
    <property type="protein sequence ID" value="AAI12744.1"/>
    <property type="molecule type" value="mRNA"/>
</dbReference>
<dbReference type="RefSeq" id="NP_001039361.1">
    <property type="nucleotide sequence ID" value="NM_001045896.2"/>
</dbReference>
<dbReference type="RefSeq" id="XP_010812732.1">
    <property type="nucleotide sequence ID" value="XM_010814430.2"/>
</dbReference>
<dbReference type="RefSeq" id="XP_024833785.1">
    <property type="nucleotide sequence ID" value="XM_024978017.2"/>
</dbReference>
<dbReference type="SMR" id="Q2KI74"/>
<dbReference type="FunCoup" id="Q2KI74">
    <property type="interactions" value="1030"/>
</dbReference>
<dbReference type="STRING" id="9913.ENSBTAP00000016776"/>
<dbReference type="PaxDb" id="9913-ENSBTAP00000016776"/>
<dbReference type="Ensembl" id="ENSBTAT00000016776.3">
    <property type="protein sequence ID" value="ENSBTAP00000016776.2"/>
    <property type="gene ID" value="ENSBTAG00000012642.3"/>
</dbReference>
<dbReference type="GeneID" id="504707"/>
<dbReference type="KEGG" id="bta:504707"/>
<dbReference type="CTD" id="8717"/>
<dbReference type="VEuPathDB" id="HostDB:ENSBTAG00000012642"/>
<dbReference type="VGNC" id="VGNC:36269">
    <property type="gene designation" value="TRADD"/>
</dbReference>
<dbReference type="eggNOG" id="ENOG502RXWE">
    <property type="taxonomic scope" value="Eukaryota"/>
</dbReference>
<dbReference type="GeneTree" id="ENSGT00390000002016"/>
<dbReference type="HOGENOM" id="CLU_052183_0_0_1"/>
<dbReference type="InParanoid" id="Q2KI74"/>
<dbReference type="OMA" id="QPCSRFL"/>
<dbReference type="OrthoDB" id="9903238at2759"/>
<dbReference type="TreeFam" id="TF331882"/>
<dbReference type="Reactome" id="R-BTA-3371378">
    <property type="pathway name" value="Regulation by c-FLIP"/>
</dbReference>
<dbReference type="Reactome" id="R-BTA-5218900">
    <property type="pathway name" value="CASP8 activity is inhibited"/>
</dbReference>
<dbReference type="Reactome" id="R-BTA-5357786">
    <property type="pathway name" value="TNFR1-induced proapoptotic signaling"/>
</dbReference>
<dbReference type="Reactome" id="R-BTA-5357905">
    <property type="pathway name" value="Regulation of TNFR1 signaling"/>
</dbReference>
<dbReference type="Reactome" id="R-BTA-5357956">
    <property type="pathway name" value="TNFR1-induced NF-kappa-B signaling pathway"/>
</dbReference>
<dbReference type="Reactome" id="R-BTA-5675482">
    <property type="pathway name" value="Regulation of necroptotic cell death"/>
</dbReference>
<dbReference type="Reactome" id="R-BTA-69416">
    <property type="pathway name" value="Dimerization of procaspase-8"/>
</dbReference>
<dbReference type="Reactome" id="R-BTA-75893">
    <property type="pathway name" value="TNF signaling"/>
</dbReference>
<dbReference type="Proteomes" id="UP000009136">
    <property type="component" value="Chromosome 18"/>
</dbReference>
<dbReference type="Bgee" id="ENSBTAG00000012642">
    <property type="expression patterns" value="Expressed in digestive system secreted substance and 105 other cell types or tissues"/>
</dbReference>
<dbReference type="GO" id="GO:0005737">
    <property type="term" value="C:cytoplasm"/>
    <property type="evidence" value="ECO:0007669"/>
    <property type="project" value="UniProtKB-SubCell"/>
</dbReference>
<dbReference type="GO" id="GO:0005856">
    <property type="term" value="C:cytoskeleton"/>
    <property type="evidence" value="ECO:0007669"/>
    <property type="project" value="UniProtKB-SubCell"/>
</dbReference>
<dbReference type="GO" id="GO:0005634">
    <property type="term" value="C:nucleus"/>
    <property type="evidence" value="ECO:0007669"/>
    <property type="project" value="UniProtKB-SubCell"/>
</dbReference>
<dbReference type="GO" id="GO:0005886">
    <property type="term" value="C:plasma membrane"/>
    <property type="evidence" value="ECO:0007669"/>
    <property type="project" value="Ensembl"/>
</dbReference>
<dbReference type="GO" id="GO:0002947">
    <property type="term" value="C:tumor necrosis factor receptor superfamily complex"/>
    <property type="evidence" value="ECO:0000318"/>
    <property type="project" value="GO_Central"/>
</dbReference>
<dbReference type="GO" id="GO:0070513">
    <property type="term" value="F:death domain binding"/>
    <property type="evidence" value="ECO:0007669"/>
    <property type="project" value="Ensembl"/>
</dbReference>
<dbReference type="GO" id="GO:0042802">
    <property type="term" value="F:identical protein binding"/>
    <property type="evidence" value="ECO:0007669"/>
    <property type="project" value="Ensembl"/>
</dbReference>
<dbReference type="GO" id="GO:0005068">
    <property type="term" value="F:transmembrane receptor protein tyrosine kinase adaptor activity"/>
    <property type="evidence" value="ECO:0000318"/>
    <property type="project" value="GO_Central"/>
</dbReference>
<dbReference type="GO" id="GO:0007249">
    <property type="term" value="P:canonical NF-kappaB signal transduction"/>
    <property type="evidence" value="ECO:0007669"/>
    <property type="project" value="Ensembl"/>
</dbReference>
<dbReference type="GO" id="GO:0097191">
    <property type="term" value="P:extrinsic apoptotic signaling pathway"/>
    <property type="evidence" value="ECO:0000318"/>
    <property type="project" value="GO_Central"/>
</dbReference>
<dbReference type="GO" id="GO:0043123">
    <property type="term" value="P:positive regulation of canonical NF-kappaB signal transduction"/>
    <property type="evidence" value="ECO:0007669"/>
    <property type="project" value="Ensembl"/>
</dbReference>
<dbReference type="GO" id="GO:0030335">
    <property type="term" value="P:positive regulation of cell migration"/>
    <property type="evidence" value="ECO:0007669"/>
    <property type="project" value="Ensembl"/>
</dbReference>
<dbReference type="GO" id="GO:0051798">
    <property type="term" value="P:positive regulation of hair follicle development"/>
    <property type="evidence" value="ECO:0007669"/>
    <property type="project" value="Ensembl"/>
</dbReference>
<dbReference type="GO" id="GO:0050729">
    <property type="term" value="P:positive regulation of inflammatory response"/>
    <property type="evidence" value="ECO:0007669"/>
    <property type="project" value="Ensembl"/>
</dbReference>
<dbReference type="GO" id="GO:0036462">
    <property type="term" value="P:TRAIL-activated apoptotic signaling pathway"/>
    <property type="evidence" value="ECO:0007669"/>
    <property type="project" value="Ensembl"/>
</dbReference>
<dbReference type="GO" id="GO:0033209">
    <property type="term" value="P:tumor necrosis factor-mediated signaling pathway"/>
    <property type="evidence" value="ECO:0007669"/>
    <property type="project" value="Ensembl"/>
</dbReference>
<dbReference type="FunFam" id="1.10.533.10:FF:000042">
    <property type="entry name" value="Tumor necrosis factor receptor type 1-associated DEATH domain protein"/>
    <property type="match status" value="1"/>
</dbReference>
<dbReference type="Gene3D" id="1.10.533.10">
    <property type="entry name" value="Death Domain, Fas"/>
    <property type="match status" value="1"/>
</dbReference>
<dbReference type="Gene3D" id="3.30.70.680">
    <property type="entry name" value="TRADD, N-terminal domain"/>
    <property type="match status" value="1"/>
</dbReference>
<dbReference type="InterPro" id="IPR011029">
    <property type="entry name" value="DEATH-like_dom_sf"/>
</dbReference>
<dbReference type="InterPro" id="IPR000488">
    <property type="entry name" value="Death_dom"/>
</dbReference>
<dbReference type="InterPro" id="IPR035712">
    <property type="entry name" value="TRADD"/>
</dbReference>
<dbReference type="InterPro" id="IPR009095">
    <property type="entry name" value="TRADD_N"/>
</dbReference>
<dbReference type="InterPro" id="IPR036729">
    <property type="entry name" value="TRADD_N_sf"/>
</dbReference>
<dbReference type="PANTHER" id="PTHR14913">
    <property type="entry name" value="TUMOR NECROSIS FACTOR RECEPTOR TYPE 1-ASSOCIATED DEATH DOMAIN PROTEIN"/>
    <property type="match status" value="1"/>
</dbReference>
<dbReference type="PANTHER" id="PTHR14913:SF0">
    <property type="entry name" value="TUMOR NECROSIS FACTOR RECEPTOR TYPE 1-ASSOCIATED DEATH DOMAIN PROTEIN"/>
    <property type="match status" value="1"/>
</dbReference>
<dbReference type="Pfam" id="PF00531">
    <property type="entry name" value="Death"/>
    <property type="match status" value="1"/>
</dbReference>
<dbReference type="Pfam" id="PF09034">
    <property type="entry name" value="TRADD_N"/>
    <property type="match status" value="1"/>
</dbReference>
<dbReference type="SMART" id="SM00005">
    <property type="entry name" value="DEATH"/>
    <property type="match status" value="1"/>
</dbReference>
<dbReference type="SUPFAM" id="SSF47986">
    <property type="entry name" value="DEATH domain"/>
    <property type="match status" value="1"/>
</dbReference>
<dbReference type="SUPFAM" id="SSF55044">
    <property type="entry name" value="TRADD, N-terminal domain"/>
    <property type="match status" value="1"/>
</dbReference>
<dbReference type="PROSITE" id="PS50017">
    <property type="entry name" value="DEATH_DOMAIN"/>
    <property type="match status" value="1"/>
</dbReference>
<name>TRADD_BOVIN</name>
<reference key="1">
    <citation type="submission" date="2006-01" db="EMBL/GenBank/DDBJ databases">
        <authorList>
            <consortium name="NIH - Mammalian Gene Collection (MGC) project"/>
        </authorList>
    </citation>
    <scope>NUCLEOTIDE SEQUENCE [LARGE SCALE MRNA]</scope>
    <source>
        <strain evidence="6">Hereford</strain>
        <tissue evidence="6">Hypothalamus</tissue>
    </source>
</reference>
<keyword id="KW-0053">Apoptosis</keyword>
<keyword id="KW-0963">Cytoplasm</keyword>
<keyword id="KW-0206">Cytoskeleton</keyword>
<keyword id="KW-0539">Nucleus</keyword>
<keyword id="KW-1185">Reference proteome</keyword>
<proteinExistence type="evidence at transcript level"/>
<sequence length="312" mass="34292">MAAGPNGLEEWVGSAYLFVESSLDKVVLSDAYAHQQQKVAMYGALQTALAESGGSPDVLQMLKIHRSDPQLIVQLRFSGRQACSRFLRAYREGALRATLQGCLARALALNSVPLQLELRAGAEQLDALLTNEERCLNCICAQKPDRLRDEELTELENALRNLTCGSAGGQGSDVQGTPAPLQSLAPSPPEEKPPPPQPGQTFLFQGQPIVNRPLNLQDQQKFARSVGLKWRKVGRSLQRSCRALRDPALDSLAYEYERDGLYEQAFQLLRRFVQAEGRRATLQRLVEALEENELTSLAEDLLGLANPDGSLA</sequence>
<organism>
    <name type="scientific">Bos taurus</name>
    <name type="common">Bovine</name>
    <dbReference type="NCBI Taxonomy" id="9913"/>
    <lineage>
        <taxon>Eukaryota</taxon>
        <taxon>Metazoa</taxon>
        <taxon>Chordata</taxon>
        <taxon>Craniata</taxon>
        <taxon>Vertebrata</taxon>
        <taxon>Euteleostomi</taxon>
        <taxon>Mammalia</taxon>
        <taxon>Eutheria</taxon>
        <taxon>Laurasiatheria</taxon>
        <taxon>Artiodactyla</taxon>
        <taxon>Ruminantia</taxon>
        <taxon>Pecora</taxon>
        <taxon>Bovidae</taxon>
        <taxon>Bovinae</taxon>
        <taxon>Bos</taxon>
    </lineage>
</organism>
<comment type="function">
    <text evidence="1 2">Adapter molecule for TNFRSF1A/TNFR1 that specifically associates with the cytoplasmic domain of activated TNFRSF1A/TNFR1 mediating its interaction with FADD. Overexpression of TRADD leads to two major TNF-induced responses, apoptosis and activation of NF-kappa-B (By similarity). The nuclear form acts as a tumor suppressor by preventing ubiquitination and degradation of isoform p19ARF/ARF of CDKN2A by TRIP12: acts by interacting with TRIP12, leading to disrupt interaction between TRIP12 and isoform p19ARF/ARF of CDKN2A (By similarity).</text>
</comment>
<comment type="subunit">
    <text evidence="1 2">Stimulation of TNF-alpha receptor TNFRSF1A leads to the formation of two distinct signaling complexes. Plasma membrane-bound complex I is composed of TNFRSF1A, TRADD, RIPK1, TRAF2 and BIRC2/c-IAP1 or BIRC3 which interacts with CHUCK/IKK-alpha, IKBKB/IKK-beta and IKBKG/IKK-gamma promoting cell survival. Subsequently, TRADD, RIPK1 and TRAF2 dissociate from TNFRSF1A and form cytoplasmic complex II with FADD and caspase CASP8 promoting cell apoptosis. Within complex I, interacts with TNFRSF1A/TNFR1, TRAF2 and kinase RIPK1. Within complex I, interacts with TRPC4AP; the interaction promotes NF-kappa B activation. UXT1 associates with complex I; the interaction prevents the formation of complex II. Within complex I Interacts with scaffold protein DAB2IP. Interacts with autophagy receptor SQSTM1 (By similarity). Interacts with E3 ligase TRIP12 (By similarity). Interacts with kinase HIPK2. Interacts with keratin KRT14. Interacts with keratin KRT18 (By similarity). Interacts with keratins KRT16 and KRT17 (By similarity). Interacts with FADD (By similarity). Interacts with TOMM70 (By similarity). Interacts with TMC8; the interaction impairs the formation of complex I and facilites complex II formation (By similarity).</text>
</comment>
<comment type="subcellular location">
    <subcellularLocation>
        <location evidence="2">Nucleus</location>
    </subcellularLocation>
    <subcellularLocation>
        <location evidence="1">Cytoplasm</location>
    </subcellularLocation>
    <subcellularLocation>
        <location evidence="1">Cytoplasm</location>
        <location evidence="1">Cytoskeleton</location>
    </subcellularLocation>
    <text evidence="2">Shuttles between the cytoplasm and the nucleus.</text>
</comment>
<comment type="domain">
    <text evidence="1">Requires the intact death domain to associate with TNFRSF1A/TNFR1.</text>
</comment>
<evidence type="ECO:0000250" key="1">
    <source>
        <dbReference type="UniProtKB" id="Q15628"/>
    </source>
</evidence>
<evidence type="ECO:0000250" key="2">
    <source>
        <dbReference type="UniProtKB" id="Q3U0V2"/>
    </source>
</evidence>
<evidence type="ECO:0000255" key="3">
    <source>
        <dbReference type="PROSITE-ProRule" id="PRU00064"/>
    </source>
</evidence>
<evidence type="ECO:0000256" key="4">
    <source>
        <dbReference type="SAM" id="MobiDB-lite"/>
    </source>
</evidence>
<evidence type="ECO:0000305" key="5"/>
<evidence type="ECO:0000312" key="6">
    <source>
        <dbReference type="EMBL" id="AAI12744.1"/>
    </source>
</evidence>
<gene>
    <name evidence="1" type="primary">TRADD</name>
</gene>